<protein>
    <recommendedName>
        <fullName evidence="16">Apoptotic protease-activating factor 1</fullName>
        <shortName>APAF-1</shortName>
    </recommendedName>
</protein>
<comment type="function">
    <text evidence="4 6">Oligomeric Apaf-1 mediates the cytochrome c-dependent autocatalytic activation of pro-caspase-9 (Apaf-3), leading to the activation of caspase-3 and apoptosis. This activation requires ATP. Isoform 6 is less effective in inducing apoptosis.</text>
</comment>
<comment type="subunit">
    <text evidence="4 7 8 9">Monomer. Oligomerizes to a heptameric ring, known as the apoptosome, upon binding of cytochrome c and dATP. Oligomeric Apaf-1 and pro-caspase-9 bind to each other via their respective NH2-terminal CARD domains and consecutively mature caspase-9 is released from the complex. Pro-caspase-3 is recruited into the Apaf-1-pro-caspase-9 complex via interaction with pro-caspase-9. Interacts with APIP. Interacts (via CARD and NACHT domains) with NAIP/BIRC1 (via NACHT domain). Interacts with CIAO2A (PubMed:25716227).</text>
</comment>
<comment type="interaction">
    <interactant intactId="EBI-446492">
        <id>O14727</id>
    </interactant>
    <interactant intactId="EBI-516799">
        <id>P55211</id>
        <label>CASP9</label>
    </interactant>
    <organismsDiffer>false</organismsDiffer>
    <experiments>22</experiments>
</comment>
<comment type="interaction">
    <interactant intactId="EBI-446492">
        <id>O14727</id>
    </interactant>
    <interactant intactId="EBI-446479">
        <id>P99999</id>
        <label>CYCS</label>
    </interactant>
    <organismsDiffer>false</organismsDiffer>
    <experiments>6</experiments>
</comment>
<comment type="interaction">
    <interactant intactId="EBI-446492">
        <id>O14727</id>
    </interactant>
    <interactant intactId="EBI-357253">
        <id>P62136</id>
        <label>PPP1CA</label>
    </interactant>
    <organismsDiffer>false</organismsDiffer>
    <experiments>2</experiments>
</comment>
<comment type="interaction">
    <interactant intactId="EBI-446492">
        <id>O14727</id>
    </interactant>
    <interactant intactId="EBI-356498">
        <id>P62258</id>
        <label>YWHAE</label>
    </interactant>
    <organismsDiffer>false</organismsDiffer>
    <experiments>2</experiments>
</comment>
<comment type="subcellular location">
    <subcellularLocation>
        <location evidence="6">Cytoplasm</location>
    </subcellularLocation>
</comment>
<comment type="alternative products">
    <event type="alternative splicing"/>
    <isoform>
        <id>O14727-1</id>
        <name>1</name>
        <name>Apaf-1XL</name>
        <sequence type="displayed"/>
    </isoform>
    <isoform>
        <id>O14727-2</id>
        <name>2</name>
        <name>Apaf-1L</name>
        <sequence type="described" ref="VSP_006759"/>
    </isoform>
    <isoform>
        <id>O14727-3</id>
        <name>3</name>
        <name>Apaf-1S</name>
        <sequence type="described" ref="VSP_006759 VSP_006761"/>
    </isoform>
    <isoform>
        <id>O14727-4</id>
        <name>4</name>
        <name>Apaf-1M</name>
        <sequence type="described" ref="VSP_006761"/>
    </isoform>
    <isoform>
        <id>O14727-5</id>
        <name>5</name>
        <name>Apaf-1XS</name>
        <sequence type="described" ref="VSP_006760 VSP_006761 VSP_006762"/>
    </isoform>
    <isoform>
        <id>O14727-6</id>
        <name>6</name>
        <name>Apaf-1-ALT</name>
        <sequence type="described" ref="VSP_008965 VSP_008966"/>
    </isoform>
</comment>
<comment type="tissue specificity">
    <text>Ubiquitous. Highest levels of expression in adult spleen and peripheral blood leukocytes, and in fetal brain, kidney and lung. Isoform 1 is expressed in heart, kidney and liver.</text>
</comment>
<comment type="induction">
    <text evidence="5 10">By E2F and p53/TP53 in apoptotic neurons (PubMed:11389439). Translation is inhibited by HNRPA1, which binds to the IRES of APAF1 mRNAs (PubMed:31498791).</text>
</comment>
<comment type="domain">
    <text>The CARD domain mediates interaction with APIP.</text>
</comment>
<comment type="domain">
    <text evidence="1">The monomeric form is autoinhibited in a closed conformation through a bound ADP at the nucleotide binding site. Exchange of ADP for ATP and binding of cytochrome c trigger a large conformational change where the first WD repeat region swings out, allowing the NB-ARC domain to rotate and expose the contact areas for oligomerization (By similarity).</text>
</comment>
<comment type="miscellaneous">
    <text>Physiological concentrations of calcium ions negatively affect the assembly of apoptosome by inhibiting nucleotide exchange in the monomeric form.</text>
</comment>
<comment type="sequence caution" evidence="16">
    <conflict type="frameshift">
        <sequence resource="EMBL-CDS" id="AAK28401"/>
    </conflict>
</comment>
<comment type="online information" name="Atlas of Genetics and Cytogenetics in Oncology and Haematology">
    <link uri="https://atlasgeneticsoncology.org/gene/422/APAF1"/>
</comment>
<gene>
    <name evidence="17" type="primary">APAF1</name>
    <name type="synonym">KIAA0413</name>
</gene>
<organism>
    <name type="scientific">Homo sapiens</name>
    <name type="common">Human</name>
    <dbReference type="NCBI Taxonomy" id="9606"/>
    <lineage>
        <taxon>Eukaryota</taxon>
        <taxon>Metazoa</taxon>
        <taxon>Chordata</taxon>
        <taxon>Craniata</taxon>
        <taxon>Vertebrata</taxon>
        <taxon>Euteleostomi</taxon>
        <taxon>Mammalia</taxon>
        <taxon>Eutheria</taxon>
        <taxon>Euarchontoglires</taxon>
        <taxon>Primates</taxon>
        <taxon>Haplorrhini</taxon>
        <taxon>Catarrhini</taxon>
        <taxon>Hominidae</taxon>
        <taxon>Homo</taxon>
    </lineage>
</organism>
<keyword id="KW-0002">3D-structure</keyword>
<keyword id="KW-0025">Alternative splicing</keyword>
<keyword id="KW-0053">Apoptosis</keyword>
<keyword id="KW-0067">ATP-binding</keyword>
<keyword id="KW-0106">Calcium</keyword>
<keyword id="KW-0963">Cytoplasm</keyword>
<keyword id="KW-0903">Direct protein sequencing</keyword>
<keyword id="KW-0547">Nucleotide-binding</keyword>
<keyword id="KW-1267">Proteomics identification</keyword>
<keyword id="KW-1185">Reference proteome</keyword>
<keyword id="KW-0677">Repeat</keyword>
<keyword id="KW-0853">WD repeat</keyword>
<dbReference type="EMBL" id="AF013263">
    <property type="protein sequence ID" value="AAC51678.1"/>
    <property type="molecule type" value="mRNA"/>
</dbReference>
<dbReference type="EMBL" id="AJ243003">
    <property type="protein sequence ID" value="CAB55579.1"/>
    <property type="molecule type" value="mRNA"/>
</dbReference>
<dbReference type="EMBL" id="AJ243004">
    <property type="protein sequence ID" value="CAB55580.1"/>
    <property type="molecule type" value="mRNA"/>
</dbReference>
<dbReference type="EMBL" id="AJ243005">
    <property type="protein sequence ID" value="CAB55581.1"/>
    <property type="molecule type" value="mRNA"/>
</dbReference>
<dbReference type="EMBL" id="AJ243006">
    <property type="protein sequence ID" value="CAB55582.1"/>
    <property type="molecule type" value="mRNA"/>
</dbReference>
<dbReference type="EMBL" id="AJ243007">
    <property type="protein sequence ID" value="CAB55583.1"/>
    <property type="molecule type" value="mRNA"/>
</dbReference>
<dbReference type="EMBL" id="AJ243008">
    <property type="protein sequence ID" value="CAB55584.1"/>
    <property type="molecule type" value="mRNA"/>
</dbReference>
<dbReference type="EMBL" id="AJ243009">
    <property type="protein sequence ID" value="CAB55585.1"/>
    <property type="molecule type" value="mRNA"/>
</dbReference>
<dbReference type="EMBL" id="AJ243010">
    <property type="protein sequence ID" value="CAB55586.1"/>
    <property type="molecule type" value="mRNA"/>
</dbReference>
<dbReference type="EMBL" id="AJ243011">
    <property type="protein sequence ID" value="CAB55587.1"/>
    <property type="molecule type" value="mRNA"/>
</dbReference>
<dbReference type="EMBL" id="AJ243048">
    <property type="protein sequence ID" value="CAB55588.1"/>
    <property type="molecule type" value="mRNA"/>
</dbReference>
<dbReference type="EMBL" id="AJ243107">
    <property type="protein sequence ID" value="CAB56462.1"/>
    <property type="molecule type" value="mRNA"/>
</dbReference>
<dbReference type="EMBL" id="AF134397">
    <property type="protein sequence ID" value="AAD38344.1"/>
    <property type="molecule type" value="mRNA"/>
</dbReference>
<dbReference type="EMBL" id="AF149794">
    <property type="protein sequence ID" value="AAD34016.1"/>
    <property type="molecule type" value="mRNA"/>
</dbReference>
<dbReference type="EMBL" id="AB007873">
    <property type="protein sequence ID" value="BAA24843.2"/>
    <property type="molecule type" value="mRNA"/>
</dbReference>
<dbReference type="EMBL" id="AB103079">
    <property type="protein sequence ID" value="BAC77343.1"/>
    <property type="molecule type" value="mRNA"/>
</dbReference>
<dbReference type="EMBL" id="CH471054">
    <property type="protein sequence ID" value="EAW97606.1"/>
    <property type="molecule type" value="Genomic_DNA"/>
</dbReference>
<dbReference type="EMBL" id="BC136531">
    <property type="protein sequence ID" value="AAI36532.1"/>
    <property type="molecule type" value="mRNA"/>
</dbReference>
<dbReference type="EMBL" id="BC136532">
    <property type="protein sequence ID" value="AAI36533.1"/>
    <property type="molecule type" value="mRNA"/>
</dbReference>
<dbReference type="EMBL" id="AJ133643">
    <property type="protein sequence ID" value="CAB65085.1"/>
    <property type="molecule type" value="Genomic_DNA"/>
</dbReference>
<dbReference type="EMBL" id="AJ133644">
    <property type="protein sequence ID" value="CAB65086.1"/>
    <property type="molecule type" value="Genomic_DNA"/>
</dbReference>
<dbReference type="EMBL" id="AJ133645">
    <property type="protein sequence ID" value="CAB65087.1"/>
    <property type="molecule type" value="Genomic_DNA"/>
</dbReference>
<dbReference type="EMBL" id="AF248734">
    <property type="protein sequence ID" value="AAK28401.1"/>
    <property type="status" value="ALT_FRAME"/>
    <property type="molecule type" value="mRNA"/>
</dbReference>
<dbReference type="CCDS" id="CCDS55862.1">
    <molecule id="O14727-2"/>
</dbReference>
<dbReference type="CCDS" id="CCDS55863.1">
    <molecule id="O14727-3"/>
</dbReference>
<dbReference type="CCDS" id="CCDS9069.1">
    <molecule id="O14727-1"/>
</dbReference>
<dbReference type="CCDS" id="CCDS9070.1">
    <molecule id="O14727-4"/>
</dbReference>
<dbReference type="CCDS" id="CCDS9071.1">
    <molecule id="O14727-6"/>
</dbReference>
<dbReference type="PIR" id="T03818">
    <property type="entry name" value="T03818"/>
</dbReference>
<dbReference type="RefSeq" id="NP_001151.1">
    <molecule id="O14727-3"/>
    <property type="nucleotide sequence ID" value="NM_001160.3"/>
</dbReference>
<dbReference type="RefSeq" id="NP_037361.1">
    <molecule id="O14727-2"/>
    <property type="nucleotide sequence ID" value="NM_013229.3"/>
</dbReference>
<dbReference type="RefSeq" id="NP_863651.1">
    <molecule id="O14727-1"/>
    <property type="nucleotide sequence ID" value="NM_181861.2"/>
</dbReference>
<dbReference type="RefSeq" id="NP_863658.1">
    <molecule id="O14727-4"/>
    <property type="nucleotide sequence ID" value="NM_181868.2"/>
</dbReference>
<dbReference type="RefSeq" id="NP_863659.1">
    <molecule id="O14727-6"/>
    <property type="nucleotide sequence ID" value="NM_181869.2"/>
</dbReference>
<dbReference type="PDB" id="1C15">
    <property type="method" value="NMR"/>
    <property type="chains" value="A=1-97"/>
</dbReference>
<dbReference type="PDB" id="1CWW">
    <property type="method" value="NMR"/>
    <property type="chains" value="A=1-97"/>
</dbReference>
<dbReference type="PDB" id="1CY5">
    <property type="method" value="X-ray"/>
    <property type="resolution" value="1.30 A"/>
    <property type="chains" value="A=1-97"/>
</dbReference>
<dbReference type="PDB" id="1Z6T">
    <property type="method" value="X-ray"/>
    <property type="resolution" value="2.21 A"/>
    <property type="chains" value="A/B/C/D=1-591"/>
</dbReference>
<dbReference type="PDB" id="2P1H">
    <property type="method" value="X-ray"/>
    <property type="resolution" value="1.59 A"/>
    <property type="chains" value="A=1-92"/>
</dbReference>
<dbReference type="PDB" id="2YGS">
    <property type="method" value="X-ray"/>
    <property type="resolution" value="1.60 A"/>
    <property type="chains" value="A=1-92"/>
</dbReference>
<dbReference type="PDB" id="3J2T">
    <property type="method" value="EM"/>
    <property type="resolution" value="9.50 A"/>
    <property type="chains" value="A/B/C/D/E/F/G=1-1248"/>
</dbReference>
<dbReference type="PDB" id="3JBT">
    <property type="method" value="EM"/>
    <property type="resolution" value="3.80 A"/>
    <property type="chains" value="A/C/E/G/I/K/M=1-1248"/>
</dbReference>
<dbReference type="PDB" id="3YGS">
    <property type="method" value="X-ray"/>
    <property type="resolution" value="2.50 A"/>
    <property type="chains" value="C=1-95"/>
</dbReference>
<dbReference type="PDB" id="4RHW">
    <property type="method" value="X-ray"/>
    <property type="resolution" value="2.10 A"/>
    <property type="chains" value="A/B/C/D=1-97"/>
</dbReference>
<dbReference type="PDB" id="5JUY">
    <property type="method" value="EM"/>
    <property type="resolution" value="4.10 A"/>
    <property type="chains" value="A/B/C/D/E/F/G=1-1248"/>
</dbReference>
<dbReference type="PDB" id="5WVC">
    <property type="method" value="X-ray"/>
    <property type="resolution" value="2.99 A"/>
    <property type="chains" value="A/C/E=1-95"/>
</dbReference>
<dbReference type="PDB" id="5WVE">
    <property type="method" value="EM"/>
    <property type="resolution" value="4.40 A"/>
    <property type="chains" value="A/C/E/G/I/K/M=1-1248, O/P/Q/R/W/X=1-102"/>
</dbReference>
<dbReference type="PDB" id="8XQK">
    <property type="method" value="X-ray"/>
    <property type="resolution" value="2.85 A"/>
    <property type="chains" value="A/B/C/D=1-97"/>
</dbReference>
<dbReference type="PDBsum" id="1C15"/>
<dbReference type="PDBsum" id="1CWW"/>
<dbReference type="PDBsum" id="1CY5"/>
<dbReference type="PDBsum" id="1Z6T"/>
<dbReference type="PDBsum" id="2P1H"/>
<dbReference type="PDBsum" id="2YGS"/>
<dbReference type="PDBsum" id="3J2T"/>
<dbReference type="PDBsum" id="3JBT"/>
<dbReference type="PDBsum" id="3YGS"/>
<dbReference type="PDBsum" id="4RHW"/>
<dbReference type="PDBsum" id="5JUY"/>
<dbReference type="PDBsum" id="5WVC"/>
<dbReference type="PDBsum" id="5WVE"/>
<dbReference type="PDBsum" id="8XQK"/>
<dbReference type="BMRB" id="O14727"/>
<dbReference type="EMDB" id="EMD-5186"/>
<dbReference type="EMDB" id="EMD-6480"/>
<dbReference type="EMDB" id="EMD-6481"/>
<dbReference type="EMDB" id="EMD-6690"/>
<dbReference type="EMDB" id="EMD-8178"/>
<dbReference type="SMR" id="O14727"/>
<dbReference type="BioGRID" id="106814">
    <property type="interactions" value="95"/>
</dbReference>
<dbReference type="ComplexPortal" id="CPX-3762">
    <property type="entry name" value="Apoptosome"/>
</dbReference>
<dbReference type="CORUM" id="O14727"/>
<dbReference type="DIP" id="DIP-27624N"/>
<dbReference type="FunCoup" id="O14727">
    <property type="interactions" value="1600"/>
</dbReference>
<dbReference type="IntAct" id="O14727">
    <property type="interactions" value="58"/>
</dbReference>
<dbReference type="MINT" id="O14727"/>
<dbReference type="STRING" id="9606.ENSP00000448165"/>
<dbReference type="BindingDB" id="O14727"/>
<dbReference type="ChEMBL" id="CHEMBL1795093"/>
<dbReference type="DrugBank" id="DB00171">
    <property type="generic name" value="ATP"/>
</dbReference>
<dbReference type="TCDB" id="8.A.92.1.11">
    <property type="family name" value="the g-protein AlphaBetaGama complex (gpc) family"/>
</dbReference>
<dbReference type="GlyGen" id="O14727">
    <property type="glycosylation" value="1 site, 1 O-linked glycan (1 site)"/>
</dbReference>
<dbReference type="iPTMnet" id="O14727"/>
<dbReference type="PhosphoSitePlus" id="O14727"/>
<dbReference type="BioMuta" id="APAF1"/>
<dbReference type="jPOST" id="O14727"/>
<dbReference type="MassIVE" id="O14727"/>
<dbReference type="PaxDb" id="9606-ENSP00000448165"/>
<dbReference type="PeptideAtlas" id="O14727"/>
<dbReference type="ProteomicsDB" id="48182">
    <molecule id="O14727-1"/>
</dbReference>
<dbReference type="ProteomicsDB" id="48183">
    <molecule id="O14727-2"/>
</dbReference>
<dbReference type="ProteomicsDB" id="48184">
    <molecule id="O14727-3"/>
</dbReference>
<dbReference type="ProteomicsDB" id="48185">
    <molecule id="O14727-4"/>
</dbReference>
<dbReference type="ProteomicsDB" id="48186">
    <molecule id="O14727-5"/>
</dbReference>
<dbReference type="ProteomicsDB" id="48187">
    <molecule id="O14727-6"/>
</dbReference>
<dbReference type="Pumba" id="O14727"/>
<dbReference type="Antibodypedia" id="17738">
    <property type="antibodies" value="721 antibodies from 45 providers"/>
</dbReference>
<dbReference type="DNASU" id="317"/>
<dbReference type="Ensembl" id="ENST00000333991.5">
    <molecule id="O14727-6"/>
    <property type="protein sequence ID" value="ENSP00000334558.1"/>
    <property type="gene ID" value="ENSG00000120868.15"/>
</dbReference>
<dbReference type="Ensembl" id="ENST00000357310.5">
    <molecule id="O14727-4"/>
    <property type="protein sequence ID" value="ENSP00000349862.1"/>
    <property type="gene ID" value="ENSG00000120868.15"/>
</dbReference>
<dbReference type="Ensembl" id="ENST00000359972.6">
    <molecule id="O14727-3"/>
    <property type="protein sequence ID" value="ENSP00000353059.2"/>
    <property type="gene ID" value="ENSG00000120868.15"/>
</dbReference>
<dbReference type="Ensembl" id="ENST00000547045.5">
    <molecule id="O14727-4"/>
    <property type="protein sequence ID" value="ENSP00000449791.1"/>
    <property type="gene ID" value="ENSG00000120868.15"/>
</dbReference>
<dbReference type="Ensembl" id="ENST00000550527.5">
    <molecule id="O14727-2"/>
    <property type="protein sequence ID" value="ENSP00000448449.1"/>
    <property type="gene ID" value="ENSG00000120868.15"/>
</dbReference>
<dbReference type="Ensembl" id="ENST00000551964.6">
    <molecule id="O14727-1"/>
    <property type="protein sequence ID" value="ENSP00000448165.2"/>
    <property type="gene ID" value="ENSG00000120868.15"/>
</dbReference>
<dbReference type="Ensembl" id="ENST00000552268.5">
    <molecule id="O14727-6"/>
    <property type="protein sequence ID" value="ENSP00000448826.1"/>
    <property type="gene ID" value="ENSG00000120868.15"/>
</dbReference>
<dbReference type="Ensembl" id="ENST00000715693.1">
    <molecule id="O14727-1"/>
    <property type="protein sequence ID" value="ENSP00000520503.1"/>
    <property type="gene ID" value="ENSG00000120868.15"/>
</dbReference>
<dbReference type="GeneID" id="317"/>
<dbReference type="KEGG" id="hsa:317"/>
<dbReference type="MANE-Select" id="ENST00000551964.6">
    <property type="protein sequence ID" value="ENSP00000448165.2"/>
    <property type="RefSeq nucleotide sequence ID" value="NM_181861.2"/>
    <property type="RefSeq protein sequence ID" value="NP_863651.1"/>
</dbReference>
<dbReference type="UCSC" id="uc001tfz.4">
    <molecule id="O14727-1"/>
    <property type="organism name" value="human"/>
</dbReference>
<dbReference type="AGR" id="HGNC:576"/>
<dbReference type="CTD" id="317"/>
<dbReference type="DisGeNET" id="317"/>
<dbReference type="GeneCards" id="APAF1"/>
<dbReference type="HGNC" id="HGNC:576">
    <property type="gene designation" value="APAF1"/>
</dbReference>
<dbReference type="HPA" id="ENSG00000120868">
    <property type="expression patterns" value="Tissue enhanced (bone)"/>
</dbReference>
<dbReference type="MalaCards" id="APAF1"/>
<dbReference type="MIM" id="602233">
    <property type="type" value="gene"/>
</dbReference>
<dbReference type="neXtProt" id="NX_O14727"/>
<dbReference type="OpenTargets" id="ENSG00000120868"/>
<dbReference type="PharmGKB" id="PA24868"/>
<dbReference type="VEuPathDB" id="HostDB:ENSG00000120868"/>
<dbReference type="eggNOG" id="KOG4155">
    <property type="taxonomic scope" value="Eukaryota"/>
</dbReference>
<dbReference type="eggNOG" id="KOG4658">
    <property type="taxonomic scope" value="Eukaryota"/>
</dbReference>
<dbReference type="GeneTree" id="ENSGT00940000157710"/>
<dbReference type="HOGENOM" id="CLU_005071_1_0_1"/>
<dbReference type="InParanoid" id="O14727"/>
<dbReference type="OMA" id="GAYLKWW"/>
<dbReference type="OrthoDB" id="1357022at2759"/>
<dbReference type="PAN-GO" id="O14727">
    <property type="GO annotations" value="0 GO annotations based on evolutionary models"/>
</dbReference>
<dbReference type="PhylomeDB" id="O14727"/>
<dbReference type="TreeFam" id="TF323866"/>
<dbReference type="PathwayCommons" id="O14727"/>
<dbReference type="Reactome" id="R-HSA-111458">
    <property type="pathway name" value="Formation of apoptosome"/>
</dbReference>
<dbReference type="Reactome" id="R-HSA-111459">
    <property type="pathway name" value="Activation of caspases through apoptosome-mediated cleavage"/>
</dbReference>
<dbReference type="Reactome" id="R-HSA-111463">
    <property type="pathway name" value="SMAC (DIABLO) binds to IAPs"/>
</dbReference>
<dbReference type="Reactome" id="R-HSA-111464">
    <property type="pathway name" value="SMAC(DIABLO)-mediated dissociation of IAP:caspase complexes"/>
</dbReference>
<dbReference type="Reactome" id="R-HSA-6798695">
    <property type="pathway name" value="Neutrophil degranulation"/>
</dbReference>
<dbReference type="Reactome" id="R-HSA-6803207">
    <property type="pathway name" value="TP53 Regulates Transcription of Caspase Activators and Caspases"/>
</dbReference>
<dbReference type="Reactome" id="R-HSA-8953750">
    <property type="pathway name" value="Transcriptional Regulation by E2F6"/>
</dbReference>
<dbReference type="Reactome" id="R-HSA-9627069">
    <property type="pathway name" value="Regulation of the apoptosome activity"/>
</dbReference>
<dbReference type="SABIO-RK" id="O14727"/>
<dbReference type="SignaLink" id="O14727"/>
<dbReference type="SIGNOR" id="O14727"/>
<dbReference type="BioGRID-ORCS" id="317">
    <property type="hits" value="16 hits in 1163 CRISPR screens"/>
</dbReference>
<dbReference type="ChiTaRS" id="APAF1">
    <property type="organism name" value="human"/>
</dbReference>
<dbReference type="EvolutionaryTrace" id="O14727"/>
<dbReference type="GeneWiki" id="APAF1"/>
<dbReference type="GenomeRNAi" id="317"/>
<dbReference type="Pharos" id="O14727">
    <property type="development level" value="Tchem"/>
</dbReference>
<dbReference type="PRO" id="PR:O14727"/>
<dbReference type="Proteomes" id="UP000005640">
    <property type="component" value="Chromosome 12"/>
</dbReference>
<dbReference type="RNAct" id="O14727">
    <property type="molecule type" value="protein"/>
</dbReference>
<dbReference type="Bgee" id="ENSG00000120868">
    <property type="expression patterns" value="Expressed in monocyte and 174 other cell types or tissues"/>
</dbReference>
<dbReference type="ExpressionAtlas" id="O14727">
    <property type="expression patterns" value="baseline and differential"/>
</dbReference>
<dbReference type="GO" id="GO:0043293">
    <property type="term" value="C:apoptosome"/>
    <property type="evidence" value="ECO:0000314"/>
    <property type="project" value="UniProtKB"/>
</dbReference>
<dbReference type="GO" id="GO:0005829">
    <property type="term" value="C:cytosol"/>
    <property type="evidence" value="ECO:0000304"/>
    <property type="project" value="Reactome"/>
</dbReference>
<dbReference type="GO" id="GO:0070062">
    <property type="term" value="C:extracellular exosome"/>
    <property type="evidence" value="ECO:0007005"/>
    <property type="project" value="UniProtKB"/>
</dbReference>
<dbReference type="GO" id="GO:0005576">
    <property type="term" value="C:extracellular region"/>
    <property type="evidence" value="ECO:0000304"/>
    <property type="project" value="Reactome"/>
</dbReference>
<dbReference type="GO" id="GO:1904813">
    <property type="term" value="C:ficolin-1-rich granule lumen"/>
    <property type="evidence" value="ECO:0000304"/>
    <property type="project" value="Reactome"/>
</dbReference>
<dbReference type="GO" id="GO:0005634">
    <property type="term" value="C:nucleus"/>
    <property type="evidence" value="ECO:0007669"/>
    <property type="project" value="Ensembl"/>
</dbReference>
<dbReference type="GO" id="GO:0032991">
    <property type="term" value="C:protein-containing complex"/>
    <property type="evidence" value="ECO:0000314"/>
    <property type="project" value="UniProtKB"/>
</dbReference>
<dbReference type="GO" id="GO:0034774">
    <property type="term" value="C:secretory granule lumen"/>
    <property type="evidence" value="ECO:0000304"/>
    <property type="project" value="Reactome"/>
</dbReference>
<dbReference type="GO" id="GO:0043531">
    <property type="term" value="F:ADP binding"/>
    <property type="evidence" value="ECO:0007669"/>
    <property type="project" value="InterPro"/>
</dbReference>
<dbReference type="GO" id="GO:0005524">
    <property type="term" value="F:ATP binding"/>
    <property type="evidence" value="ECO:0007669"/>
    <property type="project" value="UniProtKB-KW"/>
</dbReference>
<dbReference type="GO" id="GO:0140608">
    <property type="term" value="F:cysteine-type endopeptidase activator activity"/>
    <property type="evidence" value="ECO:0000304"/>
    <property type="project" value="UniProtKB"/>
</dbReference>
<dbReference type="GO" id="GO:0008656">
    <property type="term" value="F:cysteine-type endopeptidase activator activity involved in apoptotic process"/>
    <property type="evidence" value="ECO:0007669"/>
    <property type="project" value="Ensembl"/>
</dbReference>
<dbReference type="GO" id="GO:0031072">
    <property type="term" value="F:heat shock protein binding"/>
    <property type="evidence" value="ECO:0007669"/>
    <property type="project" value="Ensembl"/>
</dbReference>
<dbReference type="GO" id="GO:0042802">
    <property type="term" value="F:identical protein binding"/>
    <property type="evidence" value="ECO:0007669"/>
    <property type="project" value="Ensembl"/>
</dbReference>
<dbReference type="GO" id="GO:0000166">
    <property type="term" value="F:nucleotide binding"/>
    <property type="evidence" value="ECO:0000304"/>
    <property type="project" value="UniProtKB"/>
</dbReference>
<dbReference type="GO" id="GO:0006915">
    <property type="term" value="P:apoptotic process"/>
    <property type="evidence" value="ECO:0000304"/>
    <property type="project" value="ProtInc"/>
</dbReference>
<dbReference type="GO" id="GO:0010659">
    <property type="term" value="P:cardiac muscle cell apoptotic process"/>
    <property type="evidence" value="ECO:0007669"/>
    <property type="project" value="Ensembl"/>
</dbReference>
<dbReference type="GO" id="GO:0030154">
    <property type="term" value="P:cell differentiation"/>
    <property type="evidence" value="ECO:0007669"/>
    <property type="project" value="Ensembl"/>
</dbReference>
<dbReference type="GO" id="GO:0071560">
    <property type="term" value="P:cellular response to transforming growth factor beta stimulus"/>
    <property type="evidence" value="ECO:0007669"/>
    <property type="project" value="Ensembl"/>
</dbReference>
<dbReference type="GO" id="GO:0030900">
    <property type="term" value="P:forebrain development"/>
    <property type="evidence" value="ECO:0007669"/>
    <property type="project" value="Ensembl"/>
</dbReference>
<dbReference type="GO" id="GO:0097193">
    <property type="term" value="P:intrinsic apoptotic signaling pathway"/>
    <property type="evidence" value="ECO:0000304"/>
    <property type="project" value="UniProtKB"/>
</dbReference>
<dbReference type="GO" id="GO:0070059">
    <property type="term" value="P:intrinsic apoptotic signaling pathway in response to endoplasmic reticulum stress"/>
    <property type="evidence" value="ECO:0007669"/>
    <property type="project" value="Ensembl"/>
</dbReference>
<dbReference type="GO" id="GO:0001822">
    <property type="term" value="P:kidney development"/>
    <property type="evidence" value="ECO:0007669"/>
    <property type="project" value="Ensembl"/>
</dbReference>
<dbReference type="GO" id="GO:0007399">
    <property type="term" value="P:nervous system development"/>
    <property type="evidence" value="ECO:0000304"/>
    <property type="project" value="ProtInc"/>
</dbReference>
<dbReference type="GO" id="GO:0001843">
    <property type="term" value="P:neural tube closure"/>
    <property type="evidence" value="ECO:0007669"/>
    <property type="project" value="Ensembl"/>
</dbReference>
<dbReference type="GO" id="GO:0051402">
    <property type="term" value="P:neuron apoptotic process"/>
    <property type="evidence" value="ECO:0007669"/>
    <property type="project" value="Ensembl"/>
</dbReference>
<dbReference type="GO" id="GO:0043065">
    <property type="term" value="P:positive regulation of apoptotic process"/>
    <property type="evidence" value="ECO:0000314"/>
    <property type="project" value="UniProtKB"/>
</dbReference>
<dbReference type="GO" id="GO:2001235">
    <property type="term" value="P:positive regulation of apoptotic signaling pathway"/>
    <property type="evidence" value="ECO:0007669"/>
    <property type="project" value="Ensembl"/>
</dbReference>
<dbReference type="GO" id="GO:1902510">
    <property type="term" value="P:regulation of apoptotic DNA fragmentation"/>
    <property type="evidence" value="ECO:0007669"/>
    <property type="project" value="Ensembl"/>
</dbReference>
<dbReference type="GO" id="GO:0042981">
    <property type="term" value="P:regulation of apoptotic process"/>
    <property type="evidence" value="ECO:0000304"/>
    <property type="project" value="UniProtKB"/>
</dbReference>
<dbReference type="GO" id="GO:0072432">
    <property type="term" value="P:response to G1 DNA damage checkpoint signaling"/>
    <property type="evidence" value="ECO:0000304"/>
    <property type="project" value="UniProtKB"/>
</dbReference>
<dbReference type="GO" id="GO:0001666">
    <property type="term" value="P:response to hypoxia"/>
    <property type="evidence" value="ECO:0007669"/>
    <property type="project" value="Ensembl"/>
</dbReference>
<dbReference type="GO" id="GO:0007584">
    <property type="term" value="P:response to nutrient"/>
    <property type="evidence" value="ECO:0007669"/>
    <property type="project" value="Ensembl"/>
</dbReference>
<dbReference type="CDD" id="cd08323">
    <property type="entry name" value="CARD_APAF1"/>
    <property type="match status" value="1"/>
</dbReference>
<dbReference type="CDD" id="cd00200">
    <property type="entry name" value="WD40"/>
    <property type="match status" value="2"/>
</dbReference>
<dbReference type="FunFam" id="1.10.10.10:FF:000204">
    <property type="entry name" value="Apoptotic protease-activating factor 1"/>
    <property type="match status" value="1"/>
</dbReference>
<dbReference type="FunFam" id="1.10.533.10:FF:000014">
    <property type="entry name" value="Apoptotic protease-activating factor 1"/>
    <property type="match status" value="1"/>
</dbReference>
<dbReference type="FunFam" id="1.10.8.430:FF:000001">
    <property type="entry name" value="Apoptotic protease-activating factor 1"/>
    <property type="match status" value="1"/>
</dbReference>
<dbReference type="FunFam" id="1.25.40.370:FF:000001">
    <property type="entry name" value="Apoptotic protease-activating factor 1"/>
    <property type="match status" value="1"/>
</dbReference>
<dbReference type="FunFam" id="2.130.10.10:FF:000135">
    <property type="entry name" value="Apoptotic protease-activating factor 1"/>
    <property type="match status" value="1"/>
</dbReference>
<dbReference type="FunFam" id="2.130.10.10:FF:000196">
    <property type="entry name" value="Apoptotic protease-activating factor 1"/>
    <property type="match status" value="1"/>
</dbReference>
<dbReference type="FunFam" id="3.40.50.300:FF:000502">
    <property type="entry name" value="Apoptotic protease-activating factor 1"/>
    <property type="match status" value="1"/>
</dbReference>
<dbReference type="Gene3D" id="1.25.40.370">
    <property type="match status" value="1"/>
</dbReference>
<dbReference type="Gene3D" id="1.10.533.10">
    <property type="entry name" value="Death Domain, Fas"/>
    <property type="match status" value="1"/>
</dbReference>
<dbReference type="Gene3D" id="1.10.8.430">
    <property type="entry name" value="Helical domain of apoptotic protease-activating factors"/>
    <property type="match status" value="1"/>
</dbReference>
<dbReference type="Gene3D" id="3.40.50.300">
    <property type="entry name" value="P-loop containing nucleotide triphosphate hydrolases"/>
    <property type="match status" value="1"/>
</dbReference>
<dbReference type="Gene3D" id="1.10.10.10">
    <property type="entry name" value="Winged helix-like DNA-binding domain superfamily/Winged helix DNA-binding domain"/>
    <property type="match status" value="1"/>
</dbReference>
<dbReference type="Gene3D" id="2.130.10.10">
    <property type="entry name" value="YVTN repeat-like/Quinoprotein amine dehydrogenase"/>
    <property type="match status" value="2"/>
</dbReference>
<dbReference type="InterPro" id="IPR017251">
    <property type="entry name" value="Apaf-1"/>
</dbReference>
<dbReference type="InterPro" id="IPR041452">
    <property type="entry name" value="APAF1_C"/>
</dbReference>
<dbReference type="InterPro" id="IPR037963">
    <property type="entry name" value="APAF1_CARD_dom"/>
</dbReference>
<dbReference type="InterPro" id="IPR048975">
    <property type="entry name" value="APAF1_WHD"/>
</dbReference>
<dbReference type="InterPro" id="IPR042197">
    <property type="entry name" value="Apaf_helical"/>
</dbReference>
<dbReference type="InterPro" id="IPR001315">
    <property type="entry name" value="CARD"/>
</dbReference>
<dbReference type="InterPro" id="IPR011029">
    <property type="entry name" value="DEATH-like_dom_sf"/>
</dbReference>
<dbReference type="InterPro" id="IPR020472">
    <property type="entry name" value="G-protein_beta_WD-40_rep"/>
</dbReference>
<dbReference type="InterPro" id="IPR002182">
    <property type="entry name" value="NB-ARC"/>
</dbReference>
<dbReference type="InterPro" id="IPR027417">
    <property type="entry name" value="P-loop_NTPase"/>
</dbReference>
<dbReference type="InterPro" id="IPR015943">
    <property type="entry name" value="WD40/YVTN_repeat-like_dom_sf"/>
</dbReference>
<dbReference type="InterPro" id="IPR019775">
    <property type="entry name" value="WD40_repeat_CS"/>
</dbReference>
<dbReference type="InterPro" id="IPR036322">
    <property type="entry name" value="WD40_repeat_dom_sf"/>
</dbReference>
<dbReference type="InterPro" id="IPR001680">
    <property type="entry name" value="WD40_rpt"/>
</dbReference>
<dbReference type="InterPro" id="IPR036388">
    <property type="entry name" value="WH-like_DNA-bd_sf"/>
</dbReference>
<dbReference type="PANTHER" id="PTHR22845">
    <property type="entry name" value="APOPTOTIC PROTEASE-ACTIVATING FACTOR 1"/>
    <property type="match status" value="1"/>
</dbReference>
<dbReference type="PANTHER" id="PTHR22845:SF5">
    <property type="entry name" value="APOPTOTIC PROTEASE-ACTIVATING FACTOR 1"/>
    <property type="match status" value="1"/>
</dbReference>
<dbReference type="Pfam" id="PF21296">
    <property type="entry name" value="APAF-1-like_WHD"/>
    <property type="match status" value="1"/>
</dbReference>
<dbReference type="Pfam" id="PF17908">
    <property type="entry name" value="APAF1_C"/>
    <property type="match status" value="1"/>
</dbReference>
<dbReference type="Pfam" id="PF00619">
    <property type="entry name" value="CARD"/>
    <property type="match status" value="1"/>
</dbReference>
<dbReference type="Pfam" id="PF00931">
    <property type="entry name" value="NB-ARC"/>
    <property type="match status" value="1"/>
</dbReference>
<dbReference type="Pfam" id="PF00400">
    <property type="entry name" value="WD40"/>
    <property type="match status" value="10"/>
</dbReference>
<dbReference type="PIRSF" id="PIRSF037646">
    <property type="entry name" value="Apop_pept_activating-1"/>
    <property type="match status" value="1"/>
</dbReference>
<dbReference type="PRINTS" id="PR00364">
    <property type="entry name" value="DISEASERSIST"/>
</dbReference>
<dbReference type="PRINTS" id="PR00320">
    <property type="entry name" value="GPROTEINBRPT"/>
</dbReference>
<dbReference type="SMART" id="SM00320">
    <property type="entry name" value="WD40"/>
    <property type="match status" value="13"/>
</dbReference>
<dbReference type="SUPFAM" id="SSF47986">
    <property type="entry name" value="DEATH domain"/>
    <property type="match status" value="1"/>
</dbReference>
<dbReference type="SUPFAM" id="SSF52540">
    <property type="entry name" value="P-loop containing nucleoside triphosphate hydrolases"/>
    <property type="match status" value="1"/>
</dbReference>
<dbReference type="SUPFAM" id="SSF50978">
    <property type="entry name" value="WD40 repeat-like"/>
    <property type="match status" value="2"/>
</dbReference>
<dbReference type="PROSITE" id="PS50209">
    <property type="entry name" value="CARD"/>
    <property type="match status" value="1"/>
</dbReference>
<dbReference type="PROSITE" id="PS00678">
    <property type="entry name" value="WD_REPEATS_1"/>
    <property type="match status" value="4"/>
</dbReference>
<dbReference type="PROSITE" id="PS50082">
    <property type="entry name" value="WD_REPEATS_2"/>
    <property type="match status" value="9"/>
</dbReference>
<dbReference type="PROSITE" id="PS50294">
    <property type="entry name" value="WD_REPEATS_REGION"/>
    <property type="match status" value="1"/>
</dbReference>
<feature type="chain" id="PRO_0000050844" description="Apoptotic protease-activating factor 1">
    <location>
        <begin position="1"/>
        <end position="1248"/>
    </location>
</feature>
<feature type="domain" description="CARD" evidence="3">
    <location>
        <begin position="1"/>
        <end position="90"/>
    </location>
</feature>
<feature type="domain" description="NB-ARC">
    <location>
        <begin position="104"/>
        <end position="415"/>
    </location>
</feature>
<feature type="repeat" description="WD 1-1">
    <location>
        <begin position="613"/>
        <end position="652"/>
    </location>
</feature>
<feature type="repeat" description="WD 1-2">
    <location>
        <begin position="655"/>
        <end position="694"/>
    </location>
</feature>
<feature type="repeat" description="WD 1-3">
    <location>
        <begin position="697"/>
        <end position="738"/>
    </location>
</feature>
<feature type="repeat" description="WD 1-4">
    <location>
        <begin position="741"/>
        <end position="780"/>
    </location>
</feature>
<feature type="repeat" description="WD 1-5">
    <location>
        <begin position="796"/>
        <end position="836"/>
    </location>
</feature>
<feature type="repeat" description="WD 1-6">
    <location>
        <begin position="838"/>
        <end position="877"/>
    </location>
</feature>
<feature type="repeat" description="WD 1-7">
    <location>
        <begin position="880"/>
        <end position="910"/>
    </location>
</feature>
<feature type="repeat" description="WD 2-1">
    <location>
        <begin position="922"/>
        <end position="958"/>
    </location>
</feature>
<feature type="repeat" description="WD 2-2">
    <location>
        <begin position="959"/>
        <end position="998"/>
    </location>
</feature>
<feature type="repeat" description="WD 2-3">
    <location>
        <begin position="1001"/>
        <end position="1040"/>
    </location>
</feature>
<feature type="repeat" description="WD 2-4">
    <location>
        <begin position="1042"/>
        <end position="1080"/>
    </location>
</feature>
<feature type="repeat" description="WD 2-5">
    <location>
        <begin position="1083"/>
        <end position="1122"/>
    </location>
</feature>
<feature type="repeat" description="WD 2-6">
    <location>
        <begin position="1125"/>
        <end position="1164"/>
    </location>
</feature>
<feature type="repeat" description="WD 2-7">
    <location>
        <begin position="1175"/>
        <end position="1212"/>
    </location>
</feature>
<feature type="repeat" description="WD 2-8">
    <location>
        <begin position="1213"/>
        <end position="1248"/>
    </location>
</feature>
<feature type="region of interest" description="Interpropeller linker" evidence="1">
    <location>
        <begin position="910"/>
        <end position="921"/>
    </location>
</feature>
<feature type="binding site" evidence="2">
    <location>
        <begin position="154"/>
        <end position="161"/>
    </location>
    <ligand>
        <name>ATP</name>
        <dbReference type="ChEBI" id="CHEBI:30616"/>
    </ligand>
</feature>
<feature type="binding site" evidence="1">
    <location>
        <position position="265"/>
    </location>
    <ligand>
        <name>ATP</name>
        <dbReference type="ChEBI" id="CHEBI:30616"/>
    </ligand>
</feature>
<feature type="splice variant" id="VSP_006759" description="In isoform 2 and isoform 3." evidence="11 14 15">
    <location>
        <begin position="99"/>
        <end position="109"/>
    </location>
</feature>
<feature type="splice variant" id="VSP_008965" description="In isoform 6." evidence="13">
    <original>GSPLVVSLIGALLRDFPNRW</original>
    <variation>VVERCHWGILTDLLHKWNQS</variation>
    <location>
        <begin position="319"/>
        <end position="338"/>
    </location>
</feature>
<feature type="splice variant" id="VSP_008966" description="In isoform 6." evidence="13">
    <location>
        <begin position="339"/>
        <end position="1248"/>
    </location>
</feature>
<feature type="splice variant" id="VSP_006760" description="In isoform 5." evidence="12">
    <original>E</original>
    <variation>ETLGFESKK</variation>
    <location>
        <position position="575"/>
    </location>
</feature>
<feature type="splice variant" id="VSP_006761" description="In isoform 3, isoform 4 and isoform 5." evidence="12 14">
    <location>
        <begin position="824"/>
        <end position="866"/>
    </location>
</feature>
<feature type="splice variant" id="VSP_006762" description="In isoform 5." evidence="12">
    <location>
        <begin position="1113"/>
        <end position="1154"/>
    </location>
</feature>
<feature type="mutagenesis site" description="No association with APAF-1. No binding to pro-caspase-9." evidence="4">
    <original>K</original>
    <variation>R</variation>
    <location>
        <position position="160"/>
    </location>
</feature>
<feature type="mutagenesis site" description="Activation of pro-caspase-9 independent of cytochrome c. Increased ability to induce apoptosis." evidence="4">
    <original>M</original>
    <variation>L</variation>
    <location>
        <position position="368"/>
    </location>
</feature>
<feature type="sequence conflict" description="In Ref. 11." evidence="16" ref="11">
    <original>N</original>
    <variation>S</variation>
    <location>
        <position position="134"/>
    </location>
</feature>
<feature type="sequence conflict" description="In Ref. 2; CAB55587." evidence="16" ref="2">
    <original>G</original>
    <variation>C</variation>
    <location>
        <position position="145"/>
    </location>
</feature>
<feature type="sequence conflict" description="In Ref. 2; CAB55586." evidence="16" ref="2">
    <original>S</original>
    <variation>F</variation>
    <location>
        <position position="161"/>
    </location>
</feature>
<feature type="sequence conflict" description="In Ref. 2; CAB55581." evidence="16" ref="2">
    <original>I</original>
    <variation>T</variation>
    <location>
        <position position="370"/>
    </location>
</feature>
<feature type="sequence conflict" description="In Ref. 2; CAB55586." evidence="16" ref="2">
    <original>Y</original>
    <variation>H</variation>
    <location>
        <position position="383"/>
    </location>
</feature>
<feature type="sequence conflict" description="In Ref. 2; CAB55584." evidence="16" ref="2">
    <original>F</original>
    <variation>L</variation>
    <location>
        <position position="544"/>
    </location>
</feature>
<feature type="sequence conflict" description="In Ref. 2; CAB55580." evidence="16" ref="2">
    <original>A</original>
    <variation>T</variation>
    <location>
        <position position="580"/>
    </location>
</feature>
<feature type="sequence conflict" description="In Ref. 2; CAB55585." evidence="16" ref="2">
    <original>R</original>
    <variation>C</variation>
    <location>
        <position position="608"/>
    </location>
</feature>
<feature type="sequence conflict" description="In Ref. 2; CAB55587." evidence="16" ref="2">
    <original>H</original>
    <variation>R</variation>
    <location>
        <position position="620"/>
    </location>
</feature>
<feature type="sequence conflict" description="In Ref. 2; CAB55583." evidence="16" ref="2">
    <original>L</original>
    <variation>F</variation>
    <location>
        <position position="639"/>
    </location>
</feature>
<feature type="sequence conflict" description="In Ref. 2; CAB55579." evidence="16" ref="2">
    <original>T</original>
    <variation>A</variation>
    <location>
        <position position="708"/>
    </location>
</feature>
<feature type="sequence conflict" description="In Ref. 2; CAB55584." evidence="16" ref="2">
    <original>H</original>
    <variation>R</variation>
    <location>
        <position position="742"/>
    </location>
</feature>
<feature type="sequence conflict" description="In Ref. 2; CAB55586." evidence="16" ref="2">
    <original>V</original>
    <variation>A</variation>
    <location>
        <position position="746"/>
    </location>
</feature>
<feature type="sequence conflict" description="In Ref. 2; CAB56462." evidence="16" ref="2">
    <original>L</original>
    <variation>P</variation>
    <location>
        <position position="757"/>
    </location>
</feature>
<feature type="sequence conflict" description="In Ref. 2; CAB55581." evidence="16" ref="2">
    <original>E</original>
    <variation>G</variation>
    <location>
        <position position="795"/>
    </location>
</feature>
<feature type="sequence conflict" description="In Ref. 2; CAB55587." evidence="16" ref="2">
    <original>E</original>
    <variation>G</variation>
    <location>
        <position position="798"/>
    </location>
</feature>
<feature type="sequence conflict" description="In Ref. 2; CAB55585." evidence="16" ref="2">
    <original>D</original>
    <variation>A</variation>
    <location>
        <position position="825"/>
    </location>
</feature>
<feature type="sequence conflict" description="In Ref. 2; CAB55587." evidence="16" ref="2">
    <original>S</original>
    <variation>L</variation>
    <location>
        <position position="871"/>
    </location>
</feature>
<feature type="sequence conflict" description="In Ref. 2; CAB55581." evidence="16" ref="2">
    <original>A</original>
    <variation>T</variation>
    <location>
        <position position="876"/>
    </location>
</feature>
<feature type="sequence conflict" description="In Ref. 2; CAB55585." evidence="16" ref="2">
    <original>I</original>
    <variation>V</variation>
    <location>
        <position position="949"/>
    </location>
</feature>
<feature type="sequence conflict" description="In Ref. 2; CAB55582." evidence="16" ref="2">
    <original>H</original>
    <variation>R</variation>
    <location>
        <position position="1008"/>
    </location>
</feature>
<feature type="sequence conflict" description="In Ref. 2; CAB55582." evidence="16" ref="2">
    <original>S</original>
    <variation>P</variation>
    <location>
        <position position="1056"/>
    </location>
</feature>
<feature type="sequence conflict" description="In Ref. 6; BAA24843." evidence="16" ref="6">
    <original>L</original>
    <variation>I</variation>
    <location>
        <position position="1241"/>
    </location>
</feature>
<feature type="helix" evidence="18">
    <location>
        <begin position="3"/>
        <end position="11"/>
    </location>
</feature>
<feature type="helix" evidence="18">
    <location>
        <begin position="13"/>
        <end position="19"/>
    </location>
</feature>
<feature type="helix" evidence="18">
    <location>
        <begin position="22"/>
        <end position="32"/>
    </location>
</feature>
<feature type="helix" evidence="18">
    <location>
        <begin position="37"/>
        <end position="44"/>
    </location>
</feature>
<feature type="strand" evidence="18">
    <location>
        <begin position="46"/>
        <end position="48"/>
    </location>
</feature>
<feature type="helix" evidence="18">
    <location>
        <begin position="49"/>
        <end position="61"/>
    </location>
</feature>
<feature type="helix" evidence="18">
    <location>
        <begin position="65"/>
        <end position="77"/>
    </location>
</feature>
<feature type="helix" evidence="18">
    <location>
        <begin position="81"/>
        <end position="87"/>
    </location>
</feature>
<feature type="helix" evidence="18">
    <location>
        <begin position="88"/>
        <end position="90"/>
    </location>
</feature>
<feature type="helix" evidence="19">
    <location>
        <begin position="99"/>
        <end position="104"/>
    </location>
</feature>
<feature type="helix" evidence="19">
    <location>
        <begin position="108"/>
        <end position="116"/>
    </location>
</feature>
<feature type="helix" evidence="19">
    <location>
        <begin position="130"/>
        <end position="140"/>
    </location>
</feature>
<feature type="strand" evidence="19">
    <location>
        <begin position="148"/>
        <end position="153"/>
    </location>
</feature>
<feature type="helix" evidence="19">
    <location>
        <begin position="160"/>
        <end position="168"/>
    </location>
</feature>
<feature type="helix" evidence="19">
    <location>
        <begin position="171"/>
        <end position="177"/>
    </location>
</feature>
<feature type="strand" evidence="19">
    <location>
        <begin position="182"/>
        <end position="189"/>
    </location>
</feature>
<feature type="helix" evidence="19">
    <location>
        <begin position="192"/>
        <end position="206"/>
    </location>
</feature>
<feature type="helix" evidence="19">
    <location>
        <begin position="220"/>
        <end position="233"/>
    </location>
</feature>
<feature type="strand" evidence="19">
    <location>
        <begin position="239"/>
        <end position="245"/>
    </location>
</feature>
<feature type="helix" evidence="19">
    <location>
        <begin position="248"/>
        <end position="252"/>
    </location>
</feature>
<feature type="strand" evidence="19">
    <location>
        <begin position="259"/>
        <end position="265"/>
    </location>
</feature>
<feature type="helix" evidence="19">
    <location>
        <begin position="267"/>
        <end position="270"/>
    </location>
</feature>
<feature type="strand" evidence="19">
    <location>
        <begin position="277"/>
        <end position="281"/>
    </location>
</feature>
<feature type="helix" evidence="19">
    <location>
        <begin position="288"/>
        <end position="299"/>
    </location>
</feature>
<feature type="helix" evidence="19">
    <location>
        <begin position="303"/>
        <end position="305"/>
    </location>
</feature>
<feature type="helix" evidence="19">
    <location>
        <begin position="309"/>
        <end position="316"/>
    </location>
</feature>
<feature type="turn" evidence="19">
    <location>
        <begin position="317"/>
        <end position="319"/>
    </location>
</feature>
<feature type="helix" evidence="19">
    <location>
        <begin position="321"/>
        <end position="333"/>
    </location>
</feature>
<feature type="helix" evidence="19">
    <location>
        <begin position="338"/>
        <end position="346"/>
    </location>
</feature>
<feature type="helix" evidence="19">
    <location>
        <begin position="362"/>
        <end position="373"/>
    </location>
</feature>
<feature type="turn" evidence="19">
    <location>
        <begin position="377"/>
        <end position="379"/>
    </location>
</feature>
<feature type="helix" evidence="19">
    <location>
        <begin position="380"/>
        <end position="385"/>
    </location>
</feature>
<feature type="helix" evidence="19">
    <location>
        <begin position="386"/>
        <end position="388"/>
    </location>
</feature>
<feature type="helix" evidence="19">
    <location>
        <begin position="397"/>
        <end position="404"/>
    </location>
</feature>
<feature type="helix" evidence="19">
    <location>
        <begin position="408"/>
        <end position="420"/>
    </location>
</feature>
<feature type="strand" evidence="19">
    <location>
        <begin position="423"/>
        <end position="429"/>
    </location>
</feature>
<feature type="strand" evidence="19">
    <location>
        <begin position="432"/>
        <end position="436"/>
    </location>
</feature>
<feature type="helix" evidence="19">
    <location>
        <begin position="439"/>
        <end position="448"/>
    </location>
</feature>
<feature type="helix" evidence="19">
    <location>
        <begin position="450"/>
        <end position="452"/>
    </location>
</feature>
<feature type="helix" evidence="19">
    <location>
        <begin position="453"/>
        <end position="464"/>
    </location>
</feature>
<feature type="turn" evidence="19">
    <location>
        <begin position="465"/>
        <end position="467"/>
    </location>
</feature>
<feature type="helix" evidence="19">
    <location>
        <begin position="470"/>
        <end position="472"/>
    </location>
</feature>
<feature type="helix" evidence="19">
    <location>
        <begin position="480"/>
        <end position="493"/>
    </location>
</feature>
<feature type="helix" evidence="19">
    <location>
        <begin position="497"/>
        <end position="504"/>
    </location>
</feature>
<feature type="helix" evidence="19">
    <location>
        <begin position="507"/>
        <end position="517"/>
    </location>
</feature>
<feature type="helix" evidence="19">
    <location>
        <begin position="520"/>
        <end position="528"/>
    </location>
</feature>
<feature type="helix" evidence="19">
    <location>
        <begin position="530"/>
        <end position="532"/>
    </location>
</feature>
<feature type="helix" evidence="19">
    <location>
        <begin position="535"/>
        <end position="550"/>
    </location>
</feature>
<feature type="turn" evidence="19">
    <location>
        <begin position="551"/>
        <end position="556"/>
    </location>
</feature>
<feature type="helix" evidence="19">
    <location>
        <begin position="563"/>
        <end position="567"/>
    </location>
</feature>
<feature type="helix" evidence="19">
    <location>
        <begin position="575"/>
        <end position="585"/>
    </location>
</feature>
<reference key="1">
    <citation type="journal article" date="1997" name="Cell">
        <title>Apaf-1, a human protein homologous to C. elegans CED-4, participates in cytochrome c-dependent activation of caspase-3.</title>
        <authorList>
            <person name="Zou H."/>
            <person name="Henzel W.J."/>
            <person name="Liu X."/>
            <person name="Lutschg A."/>
            <person name="Wang X."/>
        </authorList>
    </citation>
    <scope>NUCLEOTIDE SEQUENCE [MRNA] (ISOFORM 3)</scope>
    <scope>PARTIAL PROTEIN SEQUENCE</scope>
    <source>
        <tissue>Cervix carcinoma</tissue>
    </source>
</reference>
<reference key="2">
    <citation type="journal article" date="1999" name="Biochem. Biophys. Res. Commun.">
        <title>Three new types of Apaf-1 in mammalian cells.</title>
        <authorList>
            <person name="Hahn C."/>
            <person name="Hirsch B."/>
            <person name="Jahnke D."/>
            <person name="Duerkop H."/>
            <person name="Stein H."/>
        </authorList>
    </citation>
    <scope>NUCLEOTIDE SEQUENCE [MRNA] (ISOFORMS 1; 4 AND 5)</scope>
    <source>
        <tissue>Cervix carcinoma</tissue>
        <tissue>Heart</tissue>
        <tissue>Peripheral blood</tissue>
    </source>
</reference>
<reference key="3">
    <citation type="journal article" date="1999" name="J. Biol. Chem.">
        <title>Cytochrome c and dATP-mediated oligomerization of Apaf-1 is a prerequisite for procaspase-9 activation.</title>
        <authorList>
            <person name="Saleh A."/>
            <person name="Srinivasula S.M."/>
            <person name="Acharya S."/>
            <person name="Fishel R."/>
            <person name="Alnemri E.S."/>
        </authorList>
    </citation>
    <scope>NUCLEOTIDE SEQUENCE [MRNA] (ISOFORM 2)</scope>
    <source>
        <tissue>T-cell</tissue>
    </source>
</reference>
<reference key="4">
    <citation type="journal article" date="1999" name="EMBO J.">
        <title>Role of cytochrome c and dATP/ATP hydrolysis in Apaf-1-mediated caspase-9 activation and apoptosis.</title>
        <authorList>
            <person name="Hu Y."/>
            <person name="Benedict M.A."/>
            <person name="Ding L."/>
            <person name="Nunez G."/>
        </authorList>
    </citation>
    <scope>NUCLEOTIDE SEQUENCE [MRNA] (ISOFORM 1)</scope>
    <scope>FUNCTION</scope>
    <scope>SUBUNIT</scope>
    <scope>MUTAGENESIS OF LYS-160 AND MET-368</scope>
    <source>
        <tissue>Kidney</tissue>
    </source>
</reference>
<reference key="5">
    <citation type="journal article" date="2003" name="Biochem. Biophys. Res. Commun.">
        <title>APAF-1-ALT, a novel alternative splicing form of APAF-1, potentially causes impeded ability of undergoing DNA damage-induced apoptosis in the LNCaP human prostate cancer cell line.</title>
        <authorList>
            <person name="Ogawa T."/>
            <person name="Shiga K."/>
            <person name="Hashimoto S."/>
            <person name="Kobayashi T."/>
            <person name="Horii A."/>
            <person name="Furukawa T."/>
        </authorList>
    </citation>
    <scope>NUCLEOTIDE SEQUENCE [MRNA] (ISOFORMS 1 AND 6)</scope>
    <scope>FUNCTION</scope>
    <scope>SUBCELLULAR LOCATION</scope>
    <source>
        <tissue>Prostatic carcinoma</tissue>
    </source>
</reference>
<reference key="6">
    <citation type="journal article" date="1997" name="DNA Res.">
        <title>Prediction of the coding sequences of unidentified human genes. VIII. 78 new cDNA clones from brain which code for large proteins in vitro.</title>
        <authorList>
            <person name="Ishikawa K."/>
            <person name="Nagase T."/>
            <person name="Nakajima D."/>
            <person name="Seki N."/>
            <person name="Ohira M."/>
            <person name="Miyajima N."/>
            <person name="Tanaka A."/>
            <person name="Kotani H."/>
            <person name="Nomura N."/>
            <person name="Ohara O."/>
        </authorList>
    </citation>
    <scope>NUCLEOTIDE SEQUENCE [LARGE SCALE MRNA] (ISOFORM 2)</scope>
    <source>
        <tissue>Brain</tissue>
    </source>
</reference>
<reference key="7">
    <citation type="journal article" date="2002" name="DNA Res.">
        <title>Construction of expression-ready cDNA clones for KIAA genes: manual curation of 330 KIAA cDNA clones.</title>
        <authorList>
            <person name="Nakajima D."/>
            <person name="Okazaki N."/>
            <person name="Yamakawa H."/>
            <person name="Kikuno R."/>
            <person name="Ohara O."/>
            <person name="Nagase T."/>
        </authorList>
    </citation>
    <scope>SEQUENCE REVISION</scope>
</reference>
<reference key="8">
    <citation type="submission" date="2005-07" db="EMBL/GenBank/DDBJ databases">
        <authorList>
            <person name="Mural R.J."/>
            <person name="Istrail S."/>
            <person name="Sutton G.G."/>
            <person name="Florea L."/>
            <person name="Halpern A.L."/>
            <person name="Mobarry C.M."/>
            <person name="Lippert R."/>
            <person name="Walenz B."/>
            <person name="Shatkay H."/>
            <person name="Dew I."/>
            <person name="Miller J.R."/>
            <person name="Flanigan M.J."/>
            <person name="Edwards N.J."/>
            <person name="Bolanos R."/>
            <person name="Fasulo D."/>
            <person name="Halldorsson B.V."/>
            <person name="Hannenhalli S."/>
            <person name="Turner R."/>
            <person name="Yooseph S."/>
            <person name="Lu F."/>
            <person name="Nusskern D.R."/>
            <person name="Shue B.C."/>
            <person name="Zheng X.H."/>
            <person name="Zhong F."/>
            <person name="Delcher A.L."/>
            <person name="Huson D.H."/>
            <person name="Kravitz S.A."/>
            <person name="Mouchard L."/>
            <person name="Reinert K."/>
            <person name="Remington K.A."/>
            <person name="Clark A.G."/>
            <person name="Waterman M.S."/>
            <person name="Eichler E.E."/>
            <person name="Adams M.D."/>
            <person name="Hunkapiller M.W."/>
            <person name="Myers E.W."/>
            <person name="Venter J.C."/>
        </authorList>
    </citation>
    <scope>NUCLEOTIDE SEQUENCE [LARGE SCALE GENOMIC DNA]</scope>
</reference>
<reference key="9">
    <citation type="journal article" date="2004" name="Genome Res.">
        <title>The status, quality, and expansion of the NIH full-length cDNA project: the Mammalian Gene Collection (MGC).</title>
        <authorList>
            <consortium name="The MGC Project Team"/>
        </authorList>
    </citation>
    <scope>NUCLEOTIDE SEQUENCE [LARGE SCALE MRNA] (ISOFORM 1)</scope>
</reference>
<reference key="10">
    <citation type="submission" date="1999-03" db="EMBL/GenBank/DDBJ databases">
        <title>The mammalian CED4 homologue, APAF1, exists as two distinct forms in human cells.</title>
        <authorList>
            <person name="Roberts D.L."/>
            <person name="Dalgleish R."/>
            <person name="Cohen G.M."/>
            <person name="MacFarlane M."/>
        </authorList>
    </citation>
    <scope>NUCLEOTIDE SEQUENCE [GENOMIC DNA] OF 810-864 AND 866-883</scope>
</reference>
<reference key="11">
    <citation type="submission" date="2000-03" db="EMBL/GenBank/DDBJ databases">
        <title>Cloning of variant Apaf1.</title>
        <authorList>
            <person name="Won M."/>
            <person name="Lee J.-W."/>
            <person name="Ohr H.-H."/>
            <person name="Kim D.-U."/>
            <person name="Chung K.-S."/>
            <person name="Lee M."/>
            <person name="Yoo H.-S."/>
        </authorList>
    </citation>
    <scope>NUCLEOTIDE SEQUENCE [MRNA] OF 1-138 (ISOFORMS 1/4/5)</scope>
</reference>
<reference key="12">
    <citation type="journal article" date="1998" name="Mol. Cell">
        <title>Autoactivation of procaspase-9 by Apaf-1-mediated oligomerization.</title>
        <authorList>
            <person name="Srinivasula S.M."/>
            <person name="Ahmad M."/>
            <person name="Fernandes-Alnemri T."/>
            <person name="Alnemri E.S."/>
        </authorList>
    </citation>
    <scope>APAF-1-MEDIATED OLIGOMERIZATION</scope>
</reference>
<reference key="13">
    <citation type="journal article" date="2001" name="Nat. Cell Biol.">
        <title>Apaf-1 is a transcriptional target for E2F and p53.</title>
        <authorList>
            <person name="Moroni M.C."/>
            <person name="Hickman E.S."/>
            <person name="Denchi E.L."/>
            <person name="Caprara G."/>
            <person name="Colli E."/>
            <person name="Cecconi F."/>
            <person name="Mueller H."/>
            <person name="Helin K."/>
        </authorList>
    </citation>
    <scope>INDUCTION BY E2F AND TP53</scope>
</reference>
<reference key="14">
    <citation type="journal article" date="2004" name="J. Biol. Chem.">
        <title>Induced inhibition of ischemic/hypoxic injury by APIP, a novel Apaf-1-interacting protein.</title>
        <authorList>
            <person name="Cho D.-H."/>
            <person name="Hong Y.-M."/>
            <person name="Lee H.-J."/>
            <person name="Woo H.-N."/>
            <person name="Pyo J.-O."/>
            <person name="Mak T.W."/>
            <person name="Jung Y.-K."/>
        </authorList>
    </citation>
    <scope>INTERACTION WITH APIP</scope>
</reference>
<reference key="15">
    <citation type="journal article" date="2007" name="Mol. Cell">
        <title>Calcium blocks formation of apoptosome by preventing nucleotide exchange in Apaf-1.</title>
        <authorList>
            <person name="Bao Q."/>
            <person name="Lu W."/>
            <person name="Rabinowitz J.D."/>
            <person name="Shi Y."/>
        </authorList>
    </citation>
    <scope>INHIBITION BY CALCIUM</scope>
</reference>
<reference key="16">
    <citation type="journal article" date="2011" name="Biochem. Biophys. Res. Commun.">
        <title>Integrity of ATP binding site is essential for effective inhibition of the intrinsic apoptosis pathway by NAIP.</title>
        <authorList>
            <person name="Karimpour S."/>
            <person name="Davoodi J."/>
            <person name="Ghahremani M.H."/>
        </authorList>
    </citation>
    <scope>INTERACTION WITH NAIP/BIRC1</scope>
</reference>
<reference key="17">
    <citation type="journal article" date="2015" name="Int. J. Cancer">
        <title>FAM96A is a novel pro-apoptotic tumor suppressor in gastrointestinal stromal tumors.</title>
        <authorList>
            <person name="Schwamb B."/>
            <person name="Pick R."/>
            <person name="Fernandez S.B."/>
            <person name="Voelp K."/>
            <person name="Heering J."/>
            <person name="Doetsch V."/>
            <person name="Boesser S."/>
            <person name="Jung J."/>
            <person name="Beinoraviciute-Kellner R."/>
            <person name="Wesely J."/>
            <person name="Zoernig I."/>
            <person name="Hammerschmidt M."/>
            <person name="Nowak M."/>
            <person name="Penzel R."/>
            <person name="Zatloukal K."/>
            <person name="Joos S."/>
            <person name="Rieker R.J."/>
            <person name="Agaimy A."/>
            <person name="Soeder S."/>
            <person name="Reid-Lombardo K.M."/>
            <person name="Kendrick M.L."/>
            <person name="Bardsley M.R."/>
            <person name="Hayashi Y."/>
            <person name="Asuzu D.T."/>
            <person name="Syed S.A."/>
            <person name="Ordog T."/>
            <person name="Zoernig M."/>
        </authorList>
    </citation>
    <scope>INTERACTION WITH CIAO2A</scope>
</reference>
<reference key="18">
    <citation type="journal article" date="2019" name="PLoS ONE">
        <title>EV71 3C protease induces apoptosis by cleavage of hnRNP A1 to promote apaf-1 translation.</title>
        <authorList>
            <person name="Li M.L."/>
            <person name="Lin J.Y."/>
            <person name="Chen B.S."/>
            <person name="Weng K.F."/>
            <person name="Shih S.R."/>
            <person name="Calderon J.D."/>
            <person name="Tolbert B.S."/>
            <person name="Brewer G."/>
        </authorList>
    </citation>
    <scope>INDUCTION</scope>
</reference>
<reference key="19">
    <citation type="journal article" date="1999" name="J. Mol. Biol.">
        <title>Crystal structure of Apaf-1 caspase recruitment domain: an alpha-helical Greek key fold for apoptotic signaling.</title>
        <authorList>
            <person name="Vaughn D.E."/>
            <person name="Rodriguez J."/>
            <person name="Lazebnik Y."/>
            <person name="Joshua-Tor L."/>
        </authorList>
    </citation>
    <scope>X-RAY CRYSTALLOGRAPHY (1.3 ANGSTROMS) OF 1-97</scope>
</reference>
<reference key="20">
    <citation type="journal article" date="1999" name="Cell Death Differ.">
        <title>Solution structure and mutagenesis of the caspase recruitment domain (CARD) from Apaf-1.</title>
        <authorList>
            <person name="Day C.L."/>
            <person name="Dupont C."/>
            <person name="Lackmann M."/>
            <person name="Vaux D.L."/>
            <person name="Hinds M.G."/>
        </authorList>
    </citation>
    <scope>STRUCTURE BY NMR OF 1-97</scope>
</reference>
<accession>O14727</accession>
<accession>B2RMX8</accession>
<accession>O43297</accession>
<accession>Q7Z438</accession>
<accession>Q9BXZ6</accession>
<accession>Q9UBZ5</accession>
<accession>Q9UGN8</accession>
<accession>Q9UGN9</accession>
<accession>Q9UGP0</accession>
<accession>Q9UJ58</accession>
<accession>Q9UJ59</accession>
<accession>Q9UJ60</accession>
<accession>Q9UJ61</accession>
<accession>Q9UJ62</accession>
<accession>Q9UJ63</accession>
<accession>Q9UJ64</accession>
<accession>Q9UJ65</accession>
<accession>Q9UJ66</accession>
<accession>Q9UJ67</accession>
<accession>Q9UNC9</accession>
<name>APAF_HUMAN</name>
<sequence>MDAKARNCLLQHREALEKDIKTSYIMDHMISDGFLTISEEEKVRNEPTQQQRAAMLIKMILKKDNDSYVSFYNALLHEGYKDLAALLHDGIPVVSSSSGKDSVSGITSYVRTVLCEGGVPQRPVVFVTRKKLVNAIQQKLSKLKGEPGWVTIHGMAGCGKSVLAAEAVRDHSLLEGCFPGGVHWVSVGKQDKSGLLMKLQNLCTRLDQDESFSQRLPLNIEEAKDRLRILMLRKHPRSLLILDDVWDSWVLKAFDSQCQILLTTRDKSVTDSVMGPKYVVPVESSLGKEKGLEILSLFVNMKKADLPEQAHSIIKECKGSPLVVSLIGALLRDFPNRWEYYLKQLQNKQFKRIRKSSSYDYEALDEAMSISVEMLREDIKDYYTDLSILQKDVKVPTKVLCILWDMETEEVEDILQEFVNKSLLFCDRNGKSFRYYLHDLQVDFLTEKNCSQLQDLHKKIITQFQRYHQPHTLSPDQEDCMYWYNFLAYHMASAKMHKELCALMFSLDWIKAKTELVGPAHLIHEFVEYRHILDEKDCAVSENFQEFLSLNGHLLGRQPFPNIVQLGLCEPETSEVYQQAKLQAKQEVDNGMLYLEWINKKNITNLSRLVVRPHTDAVYHACFSEDGQRIASCGADKTLQVFKAETGEKLLEIKAHEDEVLCCAFSTDDRFIATCSVDKKVKIWNSMTGELVHTYDEHSEQVNCCHFTNSSHHLLLATGSSDCFLKLWDLNQKECRNTMFGHTNSVNHCRFSPDDKLLASCSADGTLKLWDATSANERKSINVKQFFLNLEDPQEDMEVIVKCCSWSADGARIMVAAKNKIFLFDIHTSGLLGEIHTGHHSTIQYCDFSPQNHLAVVALSQYCVELWNTDSRSKVADCRGHLSWVHGVMFSPDGSSFLTSSDDQTIRLWETKKVCKNSAVMLKQEVDVVFQENEVMVLAVDHIRRLQLINGRTGQIDYLTEAQVSCCCLSPHLQYIAFGDENGAIEILELVNNRIFQSRFQHKKTVWHIQFTADEKTLISSSDDAEIQVWNWQLDKCIFLRGHQETVKDFRLLKNSRLLSWSFDGTVKVWNIITGNKEKDFVCHQGTVLSCDISHDATKFSSTSADKTAKIWSFDLLLPLHELRGHNGCVRCSAFSVDSTLLATGDDNGEIRIWNVSNGELLHLCAPLSEEGAATHGGWVTDLCFSPDGKMLISAGGYIKWWNVVTGESSQTFYTNGTNLKKIHVSPDFKTYVTVDNLGILYILQTLE</sequence>
<evidence type="ECO:0000250" key="1"/>
<evidence type="ECO:0000255" key="2"/>
<evidence type="ECO:0000255" key="3">
    <source>
        <dbReference type="PROSITE-ProRule" id="PRU00046"/>
    </source>
</evidence>
<evidence type="ECO:0000269" key="4">
    <source>
    </source>
</evidence>
<evidence type="ECO:0000269" key="5">
    <source>
    </source>
</evidence>
<evidence type="ECO:0000269" key="6">
    <source>
    </source>
</evidence>
<evidence type="ECO:0000269" key="7">
    <source>
    </source>
</evidence>
<evidence type="ECO:0000269" key="8">
    <source>
    </source>
</evidence>
<evidence type="ECO:0000269" key="9">
    <source>
    </source>
</evidence>
<evidence type="ECO:0000269" key="10">
    <source>
    </source>
</evidence>
<evidence type="ECO:0000303" key="11">
    <source>
    </source>
</evidence>
<evidence type="ECO:0000303" key="12">
    <source>
    </source>
</evidence>
<evidence type="ECO:0000303" key="13">
    <source>
    </source>
</evidence>
<evidence type="ECO:0000303" key="14">
    <source>
    </source>
</evidence>
<evidence type="ECO:0000303" key="15">
    <source>
    </source>
</evidence>
<evidence type="ECO:0000305" key="16"/>
<evidence type="ECO:0000312" key="17">
    <source>
        <dbReference type="HGNC" id="HGNC:576"/>
    </source>
</evidence>
<evidence type="ECO:0007829" key="18">
    <source>
        <dbReference type="PDB" id="1CY5"/>
    </source>
</evidence>
<evidence type="ECO:0007829" key="19">
    <source>
        <dbReference type="PDB" id="1Z6T"/>
    </source>
</evidence>
<proteinExistence type="evidence at protein level"/>